<reference key="1">
    <citation type="submission" date="2008-02" db="EMBL/GenBank/DDBJ databases">
        <title>Complete sequence of chromosome 1 of Burkholderia cenocepacia MC0-3.</title>
        <authorList>
            <person name="Copeland A."/>
            <person name="Lucas S."/>
            <person name="Lapidus A."/>
            <person name="Barry K."/>
            <person name="Bruce D."/>
            <person name="Goodwin L."/>
            <person name="Glavina del Rio T."/>
            <person name="Dalin E."/>
            <person name="Tice H."/>
            <person name="Pitluck S."/>
            <person name="Chain P."/>
            <person name="Malfatti S."/>
            <person name="Shin M."/>
            <person name="Vergez L."/>
            <person name="Schmutz J."/>
            <person name="Larimer F."/>
            <person name="Land M."/>
            <person name="Hauser L."/>
            <person name="Kyrpides N."/>
            <person name="Mikhailova N."/>
            <person name="Tiedje J."/>
            <person name="Richardson P."/>
        </authorList>
    </citation>
    <scope>NUCLEOTIDE SEQUENCE [LARGE SCALE GENOMIC DNA]</scope>
    <source>
        <strain>MC0-3</strain>
    </source>
</reference>
<dbReference type="EC" id="6.1.1.11" evidence="1"/>
<dbReference type="EMBL" id="CP000958">
    <property type="protein sequence ID" value="ACA90117.1"/>
    <property type="molecule type" value="Genomic_DNA"/>
</dbReference>
<dbReference type="RefSeq" id="WP_012328090.1">
    <property type="nucleotide sequence ID" value="NC_010508.1"/>
</dbReference>
<dbReference type="SMR" id="B1JX98"/>
<dbReference type="GeneID" id="83047730"/>
<dbReference type="KEGG" id="bcm:Bcenmc03_0940"/>
<dbReference type="HOGENOM" id="CLU_023797_1_1_4"/>
<dbReference type="UniPathway" id="UPA00906">
    <property type="reaction ID" value="UER00895"/>
</dbReference>
<dbReference type="Proteomes" id="UP000002169">
    <property type="component" value="Chromosome 1"/>
</dbReference>
<dbReference type="GO" id="GO:0005737">
    <property type="term" value="C:cytoplasm"/>
    <property type="evidence" value="ECO:0007669"/>
    <property type="project" value="UniProtKB-SubCell"/>
</dbReference>
<dbReference type="GO" id="GO:0005524">
    <property type="term" value="F:ATP binding"/>
    <property type="evidence" value="ECO:0007669"/>
    <property type="project" value="UniProtKB-UniRule"/>
</dbReference>
<dbReference type="GO" id="GO:0004828">
    <property type="term" value="F:serine-tRNA ligase activity"/>
    <property type="evidence" value="ECO:0007669"/>
    <property type="project" value="UniProtKB-UniRule"/>
</dbReference>
<dbReference type="GO" id="GO:0016260">
    <property type="term" value="P:selenocysteine biosynthetic process"/>
    <property type="evidence" value="ECO:0007669"/>
    <property type="project" value="UniProtKB-UniRule"/>
</dbReference>
<dbReference type="GO" id="GO:0006434">
    <property type="term" value="P:seryl-tRNA aminoacylation"/>
    <property type="evidence" value="ECO:0007669"/>
    <property type="project" value="UniProtKB-UniRule"/>
</dbReference>
<dbReference type="CDD" id="cd00770">
    <property type="entry name" value="SerRS_core"/>
    <property type="match status" value="1"/>
</dbReference>
<dbReference type="Gene3D" id="3.30.930.10">
    <property type="entry name" value="Bira Bifunctional Protein, Domain 2"/>
    <property type="match status" value="1"/>
</dbReference>
<dbReference type="Gene3D" id="1.10.287.40">
    <property type="entry name" value="Serine-tRNA synthetase, tRNA binding domain"/>
    <property type="match status" value="1"/>
</dbReference>
<dbReference type="HAMAP" id="MF_00176">
    <property type="entry name" value="Ser_tRNA_synth_type1"/>
    <property type="match status" value="1"/>
</dbReference>
<dbReference type="InterPro" id="IPR002314">
    <property type="entry name" value="aa-tRNA-synt_IIb"/>
</dbReference>
<dbReference type="InterPro" id="IPR006195">
    <property type="entry name" value="aa-tRNA-synth_II"/>
</dbReference>
<dbReference type="InterPro" id="IPR045864">
    <property type="entry name" value="aa-tRNA-synth_II/BPL/LPL"/>
</dbReference>
<dbReference type="InterPro" id="IPR002317">
    <property type="entry name" value="Ser-tRNA-ligase_type_1"/>
</dbReference>
<dbReference type="InterPro" id="IPR015866">
    <property type="entry name" value="Ser-tRNA-synth_1_N"/>
</dbReference>
<dbReference type="InterPro" id="IPR042103">
    <property type="entry name" value="SerRS_1_N_sf"/>
</dbReference>
<dbReference type="InterPro" id="IPR033729">
    <property type="entry name" value="SerRS_core"/>
</dbReference>
<dbReference type="InterPro" id="IPR010978">
    <property type="entry name" value="tRNA-bd_arm"/>
</dbReference>
<dbReference type="NCBIfam" id="TIGR00414">
    <property type="entry name" value="serS"/>
    <property type="match status" value="1"/>
</dbReference>
<dbReference type="PANTHER" id="PTHR43697:SF1">
    <property type="entry name" value="SERINE--TRNA LIGASE"/>
    <property type="match status" value="1"/>
</dbReference>
<dbReference type="PANTHER" id="PTHR43697">
    <property type="entry name" value="SERYL-TRNA SYNTHETASE"/>
    <property type="match status" value="1"/>
</dbReference>
<dbReference type="Pfam" id="PF02403">
    <property type="entry name" value="Seryl_tRNA_N"/>
    <property type="match status" value="1"/>
</dbReference>
<dbReference type="Pfam" id="PF00587">
    <property type="entry name" value="tRNA-synt_2b"/>
    <property type="match status" value="1"/>
</dbReference>
<dbReference type="PIRSF" id="PIRSF001529">
    <property type="entry name" value="Ser-tRNA-synth_IIa"/>
    <property type="match status" value="1"/>
</dbReference>
<dbReference type="PRINTS" id="PR00981">
    <property type="entry name" value="TRNASYNTHSER"/>
</dbReference>
<dbReference type="SUPFAM" id="SSF55681">
    <property type="entry name" value="Class II aaRS and biotin synthetases"/>
    <property type="match status" value="1"/>
</dbReference>
<dbReference type="SUPFAM" id="SSF46589">
    <property type="entry name" value="tRNA-binding arm"/>
    <property type="match status" value="1"/>
</dbReference>
<dbReference type="PROSITE" id="PS50862">
    <property type="entry name" value="AA_TRNA_LIGASE_II"/>
    <property type="match status" value="1"/>
</dbReference>
<keyword id="KW-0030">Aminoacyl-tRNA synthetase</keyword>
<keyword id="KW-0067">ATP-binding</keyword>
<keyword id="KW-0963">Cytoplasm</keyword>
<keyword id="KW-0436">Ligase</keyword>
<keyword id="KW-0547">Nucleotide-binding</keyword>
<keyword id="KW-0648">Protein biosynthesis</keyword>
<gene>
    <name evidence="1" type="primary">serS</name>
    <name type="ordered locus">Bcenmc03_0940</name>
</gene>
<protein>
    <recommendedName>
        <fullName evidence="1">Serine--tRNA ligase</fullName>
        <ecNumber evidence="1">6.1.1.11</ecNumber>
    </recommendedName>
    <alternativeName>
        <fullName evidence="1">Seryl-tRNA synthetase</fullName>
        <shortName evidence="1">SerRS</shortName>
    </alternativeName>
    <alternativeName>
        <fullName evidence="1">Seryl-tRNA(Ser/Sec) synthetase</fullName>
    </alternativeName>
</protein>
<feature type="chain" id="PRO_1000098039" description="Serine--tRNA ligase">
    <location>
        <begin position="1"/>
        <end position="433"/>
    </location>
</feature>
<feature type="binding site" evidence="1">
    <location>
        <begin position="235"/>
        <end position="237"/>
    </location>
    <ligand>
        <name>L-serine</name>
        <dbReference type="ChEBI" id="CHEBI:33384"/>
    </ligand>
</feature>
<feature type="binding site" evidence="1">
    <location>
        <begin position="266"/>
        <end position="268"/>
    </location>
    <ligand>
        <name>ATP</name>
        <dbReference type="ChEBI" id="CHEBI:30616"/>
    </ligand>
</feature>
<feature type="binding site" evidence="1">
    <location>
        <position position="289"/>
    </location>
    <ligand>
        <name>L-serine</name>
        <dbReference type="ChEBI" id="CHEBI:33384"/>
    </ligand>
</feature>
<feature type="binding site" evidence="1">
    <location>
        <begin position="353"/>
        <end position="356"/>
    </location>
    <ligand>
        <name>ATP</name>
        <dbReference type="ChEBI" id="CHEBI:30616"/>
    </ligand>
</feature>
<feature type="binding site" evidence="1">
    <location>
        <position position="388"/>
    </location>
    <ligand>
        <name>L-serine</name>
        <dbReference type="ChEBI" id="CHEBI:33384"/>
    </ligand>
</feature>
<accession>B1JX98</accession>
<proteinExistence type="inferred from homology"/>
<name>SYS_BURO0</name>
<comment type="function">
    <text evidence="1">Catalyzes the attachment of serine to tRNA(Ser). Is also able to aminoacylate tRNA(Sec) with serine, to form the misacylated tRNA L-seryl-tRNA(Sec), which will be further converted into selenocysteinyl-tRNA(Sec).</text>
</comment>
<comment type="catalytic activity">
    <reaction evidence="1">
        <text>tRNA(Ser) + L-serine + ATP = L-seryl-tRNA(Ser) + AMP + diphosphate + H(+)</text>
        <dbReference type="Rhea" id="RHEA:12292"/>
        <dbReference type="Rhea" id="RHEA-COMP:9669"/>
        <dbReference type="Rhea" id="RHEA-COMP:9703"/>
        <dbReference type="ChEBI" id="CHEBI:15378"/>
        <dbReference type="ChEBI" id="CHEBI:30616"/>
        <dbReference type="ChEBI" id="CHEBI:33019"/>
        <dbReference type="ChEBI" id="CHEBI:33384"/>
        <dbReference type="ChEBI" id="CHEBI:78442"/>
        <dbReference type="ChEBI" id="CHEBI:78533"/>
        <dbReference type="ChEBI" id="CHEBI:456215"/>
        <dbReference type="EC" id="6.1.1.11"/>
    </reaction>
</comment>
<comment type="catalytic activity">
    <reaction evidence="1">
        <text>tRNA(Sec) + L-serine + ATP = L-seryl-tRNA(Sec) + AMP + diphosphate + H(+)</text>
        <dbReference type="Rhea" id="RHEA:42580"/>
        <dbReference type="Rhea" id="RHEA-COMP:9742"/>
        <dbReference type="Rhea" id="RHEA-COMP:10128"/>
        <dbReference type="ChEBI" id="CHEBI:15378"/>
        <dbReference type="ChEBI" id="CHEBI:30616"/>
        <dbReference type="ChEBI" id="CHEBI:33019"/>
        <dbReference type="ChEBI" id="CHEBI:33384"/>
        <dbReference type="ChEBI" id="CHEBI:78442"/>
        <dbReference type="ChEBI" id="CHEBI:78533"/>
        <dbReference type="ChEBI" id="CHEBI:456215"/>
        <dbReference type="EC" id="6.1.1.11"/>
    </reaction>
</comment>
<comment type="pathway">
    <text evidence="1">Aminoacyl-tRNA biosynthesis; selenocysteinyl-tRNA(Sec) biosynthesis; L-seryl-tRNA(Sec) from L-serine and tRNA(Sec): step 1/1.</text>
</comment>
<comment type="subunit">
    <text evidence="1">Homodimer. The tRNA molecule binds across the dimer.</text>
</comment>
<comment type="subcellular location">
    <subcellularLocation>
        <location evidence="1">Cytoplasm</location>
    </subcellularLocation>
</comment>
<comment type="domain">
    <text evidence="1">Consists of two distinct domains, a catalytic core and a N-terminal extension that is involved in tRNA binding.</text>
</comment>
<comment type="similarity">
    <text evidence="1">Belongs to the class-II aminoacyl-tRNA synthetase family. Type-1 seryl-tRNA synthetase subfamily.</text>
</comment>
<sequence length="433" mass="47471">MLDIQLLRKDLDGVAKRLADRGYTLDVAAFSALEAERRAIQTHTEELQARRNSLSKQIGAMKGKGEDTSAVMAEVGGIGDDMKASEAKLGEIQARLSDLMLGMPNVAHESVPVGKDEADNVEARRWGTPRQFDFEVKDHVDVGTPLGLDFETGAKLAGARFTMLRGPIARLHRALAQFMIDTHTQQHGYTETYTPYIVNPEILYGTGQLPKFADDMFRVEKGGAENTVTQYLISTSEISLTNTVRESIVDGAALPIKLTAHSPCFRSEAGSYGRDTRGMIRQHQFDKVEMVQVVAPETSYAALDEMVGHAEAILQKLGLPYRVITLCTGDMGFSAAKTFDLEVWLPAQNTYREISSCSNTEAFQARRMQARFRNAQGKPELVHTLNGSGLAVGRTLVAVLENYQNADGSVTVPEVLRPYMGGMERIDAPAQAS</sequence>
<organism>
    <name type="scientific">Burkholderia orbicola (strain MC0-3)</name>
    <dbReference type="NCBI Taxonomy" id="406425"/>
    <lineage>
        <taxon>Bacteria</taxon>
        <taxon>Pseudomonadati</taxon>
        <taxon>Pseudomonadota</taxon>
        <taxon>Betaproteobacteria</taxon>
        <taxon>Burkholderiales</taxon>
        <taxon>Burkholderiaceae</taxon>
        <taxon>Burkholderia</taxon>
        <taxon>Burkholderia cepacia complex</taxon>
        <taxon>Burkholderia orbicola</taxon>
    </lineage>
</organism>
<evidence type="ECO:0000255" key="1">
    <source>
        <dbReference type="HAMAP-Rule" id="MF_00176"/>
    </source>
</evidence>